<sequence length="66" mass="7666">MPKMKTHKGSAKRFKKTGTGQLKRSHAFTSHLFANKTQKQKRKLRKATLVSKGDFKRIRQLLDNVK</sequence>
<proteinExistence type="inferred from homology"/>
<protein>
    <recommendedName>
        <fullName evidence="1">Large ribosomal subunit protein bL35</fullName>
    </recommendedName>
    <alternativeName>
        <fullName evidence="3">50S ribosomal protein L35</fullName>
    </alternativeName>
</protein>
<dbReference type="EMBL" id="CP000922">
    <property type="protein sequence ID" value="ACJ32907.1"/>
    <property type="molecule type" value="Genomic_DNA"/>
</dbReference>
<dbReference type="RefSeq" id="WP_003397838.1">
    <property type="nucleotide sequence ID" value="NC_011567.1"/>
</dbReference>
<dbReference type="SMR" id="B7GGV1"/>
<dbReference type="STRING" id="491915.Aflv_0523"/>
<dbReference type="GeneID" id="7036780"/>
<dbReference type="KEGG" id="afl:Aflv_0523"/>
<dbReference type="eggNOG" id="COG0291">
    <property type="taxonomic scope" value="Bacteria"/>
</dbReference>
<dbReference type="HOGENOM" id="CLU_169643_3_0_9"/>
<dbReference type="Proteomes" id="UP000000742">
    <property type="component" value="Chromosome"/>
</dbReference>
<dbReference type="GO" id="GO:0022625">
    <property type="term" value="C:cytosolic large ribosomal subunit"/>
    <property type="evidence" value="ECO:0007669"/>
    <property type="project" value="TreeGrafter"/>
</dbReference>
<dbReference type="GO" id="GO:0003735">
    <property type="term" value="F:structural constituent of ribosome"/>
    <property type="evidence" value="ECO:0007669"/>
    <property type="project" value="InterPro"/>
</dbReference>
<dbReference type="GO" id="GO:0006412">
    <property type="term" value="P:translation"/>
    <property type="evidence" value="ECO:0007669"/>
    <property type="project" value="UniProtKB-UniRule"/>
</dbReference>
<dbReference type="FunFam" id="4.10.410.60:FF:000001">
    <property type="entry name" value="50S ribosomal protein L35"/>
    <property type="match status" value="1"/>
</dbReference>
<dbReference type="Gene3D" id="4.10.410.60">
    <property type="match status" value="1"/>
</dbReference>
<dbReference type="HAMAP" id="MF_00514">
    <property type="entry name" value="Ribosomal_bL35"/>
    <property type="match status" value="1"/>
</dbReference>
<dbReference type="InterPro" id="IPR001706">
    <property type="entry name" value="Ribosomal_bL35"/>
</dbReference>
<dbReference type="InterPro" id="IPR021137">
    <property type="entry name" value="Ribosomal_bL35-like"/>
</dbReference>
<dbReference type="InterPro" id="IPR018265">
    <property type="entry name" value="Ribosomal_bL35_CS"/>
</dbReference>
<dbReference type="InterPro" id="IPR037229">
    <property type="entry name" value="Ribosomal_bL35_sf"/>
</dbReference>
<dbReference type="NCBIfam" id="TIGR00001">
    <property type="entry name" value="rpmI_bact"/>
    <property type="match status" value="1"/>
</dbReference>
<dbReference type="PANTHER" id="PTHR33343">
    <property type="entry name" value="54S RIBOSOMAL PROTEIN BL35M"/>
    <property type="match status" value="1"/>
</dbReference>
<dbReference type="PANTHER" id="PTHR33343:SF1">
    <property type="entry name" value="LARGE RIBOSOMAL SUBUNIT PROTEIN BL35M"/>
    <property type="match status" value="1"/>
</dbReference>
<dbReference type="Pfam" id="PF01632">
    <property type="entry name" value="Ribosomal_L35p"/>
    <property type="match status" value="1"/>
</dbReference>
<dbReference type="PRINTS" id="PR00064">
    <property type="entry name" value="RIBOSOMALL35"/>
</dbReference>
<dbReference type="SUPFAM" id="SSF143034">
    <property type="entry name" value="L35p-like"/>
    <property type="match status" value="1"/>
</dbReference>
<dbReference type="PROSITE" id="PS00936">
    <property type="entry name" value="RIBOSOMAL_L35"/>
    <property type="match status" value="1"/>
</dbReference>
<comment type="similarity">
    <text evidence="1">Belongs to the bacterial ribosomal protein bL35 family.</text>
</comment>
<gene>
    <name evidence="1" type="primary">rpmI</name>
    <name type="ordered locus">Aflv_0523</name>
</gene>
<keyword id="KW-0687">Ribonucleoprotein</keyword>
<keyword id="KW-0689">Ribosomal protein</keyword>
<feature type="chain" id="PRO_1000127303" description="Large ribosomal subunit protein bL35">
    <location>
        <begin position="1"/>
        <end position="66"/>
    </location>
</feature>
<feature type="region of interest" description="Disordered" evidence="2">
    <location>
        <begin position="1"/>
        <end position="24"/>
    </location>
</feature>
<feature type="compositionally biased region" description="Basic residues" evidence="2">
    <location>
        <begin position="1"/>
        <end position="16"/>
    </location>
</feature>
<name>RL35_ANOFW</name>
<accession>B7GGV1</accession>
<evidence type="ECO:0000255" key="1">
    <source>
        <dbReference type="HAMAP-Rule" id="MF_00514"/>
    </source>
</evidence>
<evidence type="ECO:0000256" key="2">
    <source>
        <dbReference type="SAM" id="MobiDB-lite"/>
    </source>
</evidence>
<evidence type="ECO:0000305" key="3"/>
<organism>
    <name type="scientific">Anoxybacillus flavithermus (strain DSM 21510 / WK1)</name>
    <dbReference type="NCBI Taxonomy" id="491915"/>
    <lineage>
        <taxon>Bacteria</taxon>
        <taxon>Bacillati</taxon>
        <taxon>Bacillota</taxon>
        <taxon>Bacilli</taxon>
        <taxon>Bacillales</taxon>
        <taxon>Anoxybacillaceae</taxon>
        <taxon>Anoxybacillus</taxon>
    </lineage>
</organism>
<reference key="1">
    <citation type="journal article" date="2008" name="Genome Biol.">
        <title>Encapsulated in silica: genome, proteome and physiology of the thermophilic bacterium Anoxybacillus flavithermus WK1.</title>
        <authorList>
            <person name="Saw J.H."/>
            <person name="Mountain B.W."/>
            <person name="Feng L."/>
            <person name="Omelchenko M.V."/>
            <person name="Hou S."/>
            <person name="Saito J.A."/>
            <person name="Stott M.B."/>
            <person name="Li D."/>
            <person name="Zhao G."/>
            <person name="Wu J."/>
            <person name="Galperin M.Y."/>
            <person name="Koonin E.V."/>
            <person name="Makarova K.S."/>
            <person name="Wolf Y.I."/>
            <person name="Rigden D.J."/>
            <person name="Dunfield P.F."/>
            <person name="Wang L."/>
            <person name="Alam M."/>
        </authorList>
    </citation>
    <scope>NUCLEOTIDE SEQUENCE [LARGE SCALE GENOMIC DNA]</scope>
    <source>
        <strain>DSM 21510 / WK1</strain>
    </source>
</reference>